<protein>
    <recommendedName>
        <fullName evidence="1">Potassium/proton antiporter CemA</fullName>
    </recommendedName>
    <alternativeName>
        <fullName evidence="1">Chloroplast envelope membrane protein A</fullName>
        <shortName evidence="1">CemA</shortName>
    </alternativeName>
</protein>
<feature type="chain" id="PRO_0000293532" description="Potassium/proton antiporter CemA">
    <location>
        <begin position="1"/>
        <end position="425"/>
    </location>
</feature>
<feature type="transmembrane region" description="Helical" evidence="1">
    <location>
        <begin position="89"/>
        <end position="109"/>
    </location>
</feature>
<feature type="transmembrane region" description="Helical" evidence="1">
    <location>
        <begin position="300"/>
        <end position="320"/>
    </location>
</feature>
<feature type="transmembrane region" description="Helical" evidence="1">
    <location>
        <begin position="350"/>
        <end position="370"/>
    </location>
</feature>
<feature type="transmembrane region" description="Helical" evidence="1">
    <location>
        <begin position="386"/>
        <end position="406"/>
    </location>
</feature>
<feature type="region of interest" description="Insert">
    <location>
        <begin position="159"/>
        <end position="278"/>
    </location>
</feature>
<feature type="region of interest" description="Disordered" evidence="2">
    <location>
        <begin position="173"/>
        <end position="192"/>
    </location>
</feature>
<feature type="compositionally biased region" description="Basic and acidic residues" evidence="2">
    <location>
        <begin position="180"/>
        <end position="192"/>
    </location>
</feature>
<name>CEMA_TETOB</name>
<organism>
    <name type="scientific">Tetradesmus obliquus</name>
    <name type="common">Green alga</name>
    <name type="synonym">Acutodesmus obliquus</name>
    <dbReference type="NCBI Taxonomy" id="3088"/>
    <lineage>
        <taxon>Eukaryota</taxon>
        <taxon>Viridiplantae</taxon>
        <taxon>Chlorophyta</taxon>
        <taxon>core chlorophytes</taxon>
        <taxon>Chlorophyceae</taxon>
        <taxon>CS clade</taxon>
        <taxon>Sphaeropleales</taxon>
        <taxon>Scenedesmaceae</taxon>
        <taxon>Tetradesmus</taxon>
    </lineage>
</organism>
<accession>Q1KVU2</accession>
<dbReference type="EMBL" id="DQ396875">
    <property type="protein sequence ID" value="ABD48265.1"/>
    <property type="molecule type" value="Genomic_DNA"/>
</dbReference>
<dbReference type="RefSeq" id="YP_635982.1">
    <property type="nucleotide sequence ID" value="NC_008101.1"/>
</dbReference>
<dbReference type="GeneID" id="4099766"/>
<dbReference type="GO" id="GO:0009706">
    <property type="term" value="C:chloroplast inner membrane"/>
    <property type="evidence" value="ECO:0007669"/>
    <property type="project" value="UniProtKB-SubCell"/>
</dbReference>
<dbReference type="GO" id="GO:0015297">
    <property type="term" value="F:antiporter activity"/>
    <property type="evidence" value="ECO:0007669"/>
    <property type="project" value="UniProtKB-KW"/>
</dbReference>
<dbReference type="GO" id="GO:0015078">
    <property type="term" value="F:proton transmembrane transporter activity"/>
    <property type="evidence" value="ECO:0007669"/>
    <property type="project" value="UniProtKB-UniRule"/>
</dbReference>
<dbReference type="GO" id="GO:0006813">
    <property type="term" value="P:potassium ion transport"/>
    <property type="evidence" value="ECO:0007669"/>
    <property type="project" value="UniProtKB-UniRule"/>
</dbReference>
<dbReference type="HAMAP" id="MF_01308">
    <property type="entry name" value="CemA_PxcA"/>
    <property type="match status" value="1"/>
</dbReference>
<dbReference type="InterPro" id="IPR004282">
    <property type="entry name" value="CemA"/>
</dbReference>
<dbReference type="PANTHER" id="PTHR33650:SF2">
    <property type="entry name" value="CHLOROPLAST ENVELOPE MEMBRANE PROTEIN"/>
    <property type="match status" value="1"/>
</dbReference>
<dbReference type="PANTHER" id="PTHR33650">
    <property type="entry name" value="CHLOROPLAST ENVELOPE MEMBRANE PROTEIN-RELATED"/>
    <property type="match status" value="1"/>
</dbReference>
<dbReference type="Pfam" id="PF03040">
    <property type="entry name" value="CemA"/>
    <property type="match status" value="2"/>
</dbReference>
<gene>
    <name evidence="1" type="primary">cemA</name>
</gene>
<evidence type="ECO:0000255" key="1">
    <source>
        <dbReference type="HAMAP-Rule" id="MF_01308"/>
    </source>
</evidence>
<evidence type="ECO:0000256" key="2">
    <source>
        <dbReference type="SAM" id="MobiDB-lite"/>
    </source>
</evidence>
<evidence type="ECO:0000305" key="3"/>
<sequence length="425" mass="49990">MQYSSKKNSYEDQNFQNRFFNSLNGQNKSSLNQNSSFSESSKQQVVSITYEEIGLFPRSFNRVFDRFFKQLFFDVENLVIQEYRFYRYLFLTTVKCLFILLFVPLGINFLSKNYLIRPVTEYYWNTHNHEIFLNSYQQKRAFTELKNFEEKIYFESLLLSENQIFFGLSEKNSTFPSSEKSQKSEHFSNQDEHTNDFYGKPKKFQTDSSLQQKNEEKVFLFENSKSLAFEPNLNQIHSSGFLIASADFSKNEVQNFQNLNLSNNTSQSKTDFASVFRTSVQKRLQVKILELAKHYNEESIEAITNFFADVLSFITLCYLLVRLEIQINITKSFLLEVFFGLDDSKKSLLILFITDLLVGYHSPNIWELFFQTLFDHYGLPESQTTIFLLVATLPVLLDVLFKYLIFRHLNRASPATVATYHAMIE</sequence>
<comment type="function">
    <text evidence="1">Contributes to K(+)/H(+) antiport activity by supporting proton efflux to control proton extrusion and homeostasis in chloroplasts in a light-dependent manner to modulate photosynthesis. Prevents excessive induction of non-photochemical quenching (NPQ) under continuous-light conditions. Indirectly promotes efficient inorganic carbon uptake into chloroplasts.</text>
</comment>
<comment type="catalytic activity">
    <reaction evidence="1">
        <text>K(+)(in) + H(+)(out) = K(+)(out) + H(+)(in)</text>
        <dbReference type="Rhea" id="RHEA:29467"/>
        <dbReference type="ChEBI" id="CHEBI:15378"/>
        <dbReference type="ChEBI" id="CHEBI:29103"/>
    </reaction>
</comment>
<comment type="subcellular location">
    <subcellularLocation>
        <location evidence="1">Plastid</location>
        <location evidence="1">Chloroplast inner membrane</location>
        <topology evidence="1">Multi-pass membrane protein</topology>
    </subcellularLocation>
</comment>
<comment type="similarity">
    <text evidence="1 3">Belongs to the CemA family.</text>
</comment>
<proteinExistence type="inferred from homology"/>
<keyword id="KW-0050">Antiport</keyword>
<keyword id="KW-0150">Chloroplast</keyword>
<keyword id="KW-0375">Hydrogen ion transport</keyword>
<keyword id="KW-0406">Ion transport</keyword>
<keyword id="KW-0472">Membrane</keyword>
<keyword id="KW-0934">Plastid</keyword>
<keyword id="KW-1001">Plastid inner membrane</keyword>
<keyword id="KW-0630">Potassium</keyword>
<keyword id="KW-0633">Potassium transport</keyword>
<keyword id="KW-0812">Transmembrane</keyword>
<keyword id="KW-1133">Transmembrane helix</keyword>
<keyword id="KW-0813">Transport</keyword>
<geneLocation type="chloroplast"/>
<reference key="1">
    <citation type="journal article" date="2006" name="BMC Evol. Biol.">
        <title>The complete chloroplast genome sequence of the chlorophycean green alga Scenedesmus obliquus reveals a compact gene organization and a biased distribution of genes on the two DNA strands.</title>
        <authorList>
            <person name="de Cambiaire J.-C."/>
            <person name="Otis C."/>
            <person name="Lemieux C."/>
            <person name="Turmel M."/>
        </authorList>
    </citation>
    <scope>NUCLEOTIDE SEQUENCE [LARGE SCALE GENOMIC DNA]</scope>
    <source>
        <strain>UTEX 393</strain>
    </source>
</reference>